<sequence length="2701" mass="308064">MTEKMSSFLYIGDIVSLYAEGSVNGFISTLGLVDDRCVVHPEAGDLANPPKKFRDCLFKVCPMNRYSAQKQYWKAKQAKQGNHTEAALLKKLQHAAELEQKQNESENKKLLGEIVKYSNVIQLLHIKSNKYLTVNKRLPALLEKNAMRVSLDAAGNEGSWFYIHPFWKLRSEGDNIVVGDKVVLMPVNAGQPLHASNIELLDNPGCKEVNAVNCNTSWKITLFMKYSSYREDVLKGGDVVRLFHAEQEKFLTCDEYEKKQHIFLRTTLRQSATSATSSKALWEIEVVHHDPCRGGAGQWNSLFRFKHLATGNYLAAELNPDYRDAQNEGKNVRDGVPPTSKKKRQAGEKIMYTLVSVPHGNDIASLFELDATTLQRADCLVPRNSYVRLRHLCTNTWVTSTSIPIDTDEERPVMLKIGTCQTKEDKEAFAIVSVPLSEVRDLDFANDANKVLATTVKKLENGTITQNERRFVTKLLEDLIFFVADVPNNGQEVLDVVITKPNRERQKLMREQNILAQVFGILKAPFKEKAGEGSMLRLEDLGDQRYAPYKYMLRLCYRVLRHSQQDYRKNQEYIAKNFCVMQSQIGYDILAEDTITALLHNNRKLLEKHITAKEIETFVSLLRRNREPRFLDYLSDLCVSNTTAIPVTQELICKFMLSPGNADILIQTKVVSMQADNPMESSILSDDIDDEEVWLYWIDSNKEPHGKAIRHLAQEAKEGTKADLEVLTYYRYQLNLFARMCLDRQYLAINQISTQLSVDLILRCVSDESLPFDLRASFCRLMLHMHVDRDPQESVVPVRYARLWTEIPTKITIHEYDSITDSSRNDMKRKFALTMEFVEEYLKEVVNQPFPFGDKEKNKLTFEVVHLARNLIYFGFYSFSELLRLTRTLLAILDIVQAPMSSYFERLSKFQDGGNNVMRTIHGVGEMMTQMVLSRGSIFPMSVPDVPPSIHPSKQGSPTEHEDVTVMDTKLKIIEILQFILSVRLDYRISYMLSIYKKEFGEDNDNAETSASGSPDTLLPSAIVPDIDEIAAQAETMFAGRKEKNPVQLDDEGGRTFLRVLIHLIMHDYPPLLSGALQLLFKHFSQRAEVLQAFKQVQLLVSNQDVDNYKQIKADLDQLRLTVEKSELWVEKSSNYENGEIGESQVKGGEEPIEESNILSPVQDGTKKPQIDSNKSNNYRIVKEILIRLSKLCVQNKKCRNQHQRLLKNMGAHSVVLDLLQIPYEKNDEKMNEVMNLAHTFLQNFCRGNPQNQVLLHKHLNLFLTPGLLEAETMRHIFMNNYHLCNEISERVVQHFVHCIETHGRHVEYLRFLQTIVKADGKYVKKCQDMVMTELINGGEDVLIFYNDRASFPILLHMMCSERDRGDESGPLAYHITLVELLAACTEGKNVYTEIKCNSLLPLDDIVRVVTHDDCIPEVKIAYVNFVNHCYVDTEVEMKEIYTSNHIWKLFENFLVDMARVCNTTTDRKHADIFLEKCVTESIMNIVSGFFNSPFSDNSTSLQTHQPVFIQLLQSAFRIYNCTWPNPAQKASVESCIRTLAEVAKNRGIAIPVDLDSQVNTLFMKSHSNMVQRAAMGWRLSARSGPRFKEALGGPAWDYRNIIEKLQDVVASLEHQFSPMMQAEFSVLVDVLYSPELLFPEGSDARIRCGAFMSKLINHTKKLMEKEEKLCIKILQTLREMLEKKDSFVEEGNTLRKILLNRYFKGDYSIGVNGHLSGAYSKTAQVGGSFSGQDSDKMGISMSDIQCLLDKEGASELVIDVIVNTKNDRIFSEGIFLGIALLEGGNTQTQYSFYQQLHEQKKSEKFFKVLYDRMKAAQKEIRSTVTVNTIDLGNKKRDDDNELMTSGPRMRVRDSTLHLKEGMKGQLTEASSATSKAYCVYRREMDPEIDIMCTGPEAGNTEEKSAEEVTMSPAIAIMQPILRFLQLLCENHNRELQNFLRNQNNKTNYNLVCETLQFLDCICGSTTGGLGLLGLYINEKNVALVNQNLESLTEYCQGPCHENQTCIATHESNGIDIIIALILNDINPLGKYRMDLVLQLKNNASKLLLAIMESRHDSENAERILFNMRPRELVDVMKNAYNQGLECDHGDDEGGDDGVSPKDVGHNIYILAHQLARHNKLLQQMLKPGSDPDEGDEALKYYANHTAQIEIVRHDRTMEQIVFPVPNICEYLTRESKCRVFNTTERDEQGSKVNDFFQQTEDLYNEMKWQKKIRNNPALFWFSRHISLWGSISFNLAVFINLAVALFYPFGDDGDEGTLSPLFSVLLWIAVAICTSMLFFFSKPVGIRPFLVSIMLRSIYTIGLGPTLILLGAANLCNKIVFLVSFVGNRGTFTRGYRAVILDMAFLYHVAYVLVCMLGLFVHEFFYSFLLFDLVYREETLLNVIKSVTRNGRSIILTAVLALILVYLFSIIGFLFLKDDFTMEVDRLKNRTPVTGSHQVPTMTLTTMMEACAKENCSPTIPASNTADEEYEDGIERTCDTLLMCIVTVLNQGLRNGGGVGDVLRRPSKDEPLFAARVVYDLLFYFIVIIIVLNLIFGVIIDTFADLRSEKQKKEEILKTTCFICGLERDKFDNKTVSFEEHIKSEHNMWHYLYFIVLVKVKDPTEYTGPESYVAQMIVEKNLDWFPRMRAMSLVSNEGDSEQNEIRSLQEKLESTMSLVKQLSGQLAELKEQMTEQRKNKQRLGFLGSNTPHVNHHMPPH</sequence>
<accession>Q14571</accession>
<accession>O94773</accession>
<evidence type="ECO:0000250" key="1">
    <source>
        <dbReference type="UniProtKB" id="P29995"/>
    </source>
</evidence>
<evidence type="ECO:0000250" key="2">
    <source>
        <dbReference type="UniProtKB" id="Q14573"/>
    </source>
</evidence>
<evidence type="ECO:0000250" key="3">
    <source>
        <dbReference type="UniProtKB" id="Q8WN96"/>
    </source>
</evidence>
<evidence type="ECO:0000250" key="4">
    <source>
        <dbReference type="UniProtKB" id="Q9Z329"/>
    </source>
</evidence>
<evidence type="ECO:0000255" key="5"/>
<evidence type="ECO:0000255" key="6">
    <source>
        <dbReference type="PROSITE-ProRule" id="PRU00131"/>
    </source>
</evidence>
<evidence type="ECO:0000256" key="7">
    <source>
        <dbReference type="SAM" id="MobiDB-lite"/>
    </source>
</evidence>
<evidence type="ECO:0000269" key="8">
    <source>
    </source>
</evidence>
<evidence type="ECO:0000269" key="9">
    <source>
    </source>
</evidence>
<evidence type="ECO:0000269" key="10">
    <source>
    </source>
</evidence>
<evidence type="ECO:0000269" key="11">
    <source>
    </source>
</evidence>
<evidence type="ECO:0000303" key="12">
    <source>
    </source>
</evidence>
<evidence type="ECO:0000303" key="13">
    <source>
    </source>
</evidence>
<evidence type="ECO:0000303" key="14">
    <source>
    </source>
</evidence>
<evidence type="ECO:0000305" key="15"/>
<evidence type="ECO:0000312" key="16">
    <source>
        <dbReference type="HGNC" id="HGNC:6181"/>
    </source>
</evidence>
<evidence type="ECO:0007744" key="17">
    <source>
    </source>
</evidence>
<evidence type="ECO:0007744" key="18">
    <source>
    </source>
</evidence>
<gene>
    <name evidence="16" type="primary">ITPR2</name>
</gene>
<proteinExistence type="evidence at protein level"/>
<dbReference type="EMBL" id="D26350">
    <property type="protein sequence ID" value="BAA05384.1"/>
    <property type="molecule type" value="mRNA"/>
</dbReference>
<dbReference type="EMBL" id="AB012610">
    <property type="protein sequence ID" value="BAA33961.1"/>
    <property type="molecule type" value="mRNA"/>
</dbReference>
<dbReference type="EMBL" id="AC023051">
    <property type="status" value="NOT_ANNOTATED_CDS"/>
    <property type="molecule type" value="Genomic_DNA"/>
</dbReference>
<dbReference type="EMBL" id="AC023425">
    <property type="status" value="NOT_ANNOTATED_CDS"/>
    <property type="molecule type" value="Genomic_DNA"/>
</dbReference>
<dbReference type="EMBL" id="AC024093">
    <property type="status" value="NOT_ANNOTATED_CDS"/>
    <property type="molecule type" value="Genomic_DNA"/>
</dbReference>
<dbReference type="EMBL" id="AC024145">
    <property type="status" value="NOT_ANNOTATED_CDS"/>
    <property type="molecule type" value="Genomic_DNA"/>
</dbReference>
<dbReference type="EMBL" id="AC055720">
    <property type="status" value="NOT_ANNOTATED_CDS"/>
    <property type="molecule type" value="Genomic_DNA"/>
</dbReference>
<dbReference type="CCDS" id="CCDS41764.1">
    <molecule id="Q14571-1"/>
</dbReference>
<dbReference type="RefSeq" id="NP_002214.2">
    <molecule id="Q14571-1"/>
    <property type="nucleotide sequence ID" value="NM_002223.4"/>
</dbReference>
<dbReference type="SMR" id="Q14571"/>
<dbReference type="BioGRID" id="109914">
    <property type="interactions" value="130"/>
</dbReference>
<dbReference type="FunCoup" id="Q14571">
    <property type="interactions" value="2256"/>
</dbReference>
<dbReference type="IntAct" id="Q14571">
    <property type="interactions" value="48"/>
</dbReference>
<dbReference type="MINT" id="Q14571"/>
<dbReference type="STRING" id="9606.ENSP00000370744"/>
<dbReference type="BindingDB" id="Q14571"/>
<dbReference type="ChEMBL" id="CHEMBL2111451"/>
<dbReference type="DrugBank" id="DB03401">
    <property type="generic name" value="1D-myo-inositol 1,4,5-trisphosphate"/>
</dbReference>
<dbReference type="DrugBank" id="DB00201">
    <property type="generic name" value="Caffeine"/>
</dbReference>
<dbReference type="GlyCosmos" id="Q14571">
    <property type="glycosylation" value="1 site, 1 glycan"/>
</dbReference>
<dbReference type="GlyGen" id="Q14571">
    <property type="glycosylation" value="4 sites, 8 N-linked glycans (3 sites), 1 O-linked glycan (1 site)"/>
</dbReference>
<dbReference type="iPTMnet" id="Q14571"/>
<dbReference type="MetOSite" id="Q14571"/>
<dbReference type="PhosphoSitePlus" id="Q14571"/>
<dbReference type="SwissPalm" id="Q14571"/>
<dbReference type="BioMuta" id="ITPR2"/>
<dbReference type="DMDM" id="259016258"/>
<dbReference type="jPOST" id="Q14571"/>
<dbReference type="MassIVE" id="Q14571"/>
<dbReference type="PaxDb" id="9606-ENSP00000370744"/>
<dbReference type="PeptideAtlas" id="Q14571"/>
<dbReference type="ProteomicsDB" id="60049">
    <molecule id="Q14571-1"/>
</dbReference>
<dbReference type="ProteomicsDB" id="60050">
    <molecule id="Q14571-2"/>
</dbReference>
<dbReference type="Pumba" id="Q14571"/>
<dbReference type="Antibodypedia" id="24309">
    <property type="antibodies" value="126 antibodies from 30 providers"/>
</dbReference>
<dbReference type="DNASU" id="3709"/>
<dbReference type="Ensembl" id="ENST00000242737.5">
    <molecule id="Q14571-2"/>
    <property type="protein sequence ID" value="ENSP00000242737.5"/>
    <property type="gene ID" value="ENSG00000123104.12"/>
</dbReference>
<dbReference type="Ensembl" id="ENST00000381340.8">
    <molecule id="Q14571-1"/>
    <property type="protein sequence ID" value="ENSP00000370744.3"/>
    <property type="gene ID" value="ENSG00000123104.12"/>
</dbReference>
<dbReference type="GeneID" id="3709"/>
<dbReference type="KEGG" id="hsa:3709"/>
<dbReference type="MANE-Select" id="ENST00000381340.8">
    <property type="protein sequence ID" value="ENSP00000370744.3"/>
    <property type="RefSeq nucleotide sequence ID" value="NM_002223.4"/>
    <property type="RefSeq protein sequence ID" value="NP_002214.2"/>
</dbReference>
<dbReference type="UCSC" id="uc001rhg.4">
    <molecule id="Q14571-1"/>
    <property type="organism name" value="human"/>
</dbReference>
<dbReference type="AGR" id="HGNC:6181"/>
<dbReference type="CTD" id="3709"/>
<dbReference type="DisGeNET" id="3709"/>
<dbReference type="GeneCards" id="ITPR2"/>
<dbReference type="HGNC" id="HGNC:6181">
    <property type="gene designation" value="ITPR2"/>
</dbReference>
<dbReference type="HPA" id="ENSG00000123104">
    <property type="expression patterns" value="Tissue enhanced (liver)"/>
</dbReference>
<dbReference type="MalaCards" id="ITPR2"/>
<dbReference type="MIM" id="106190">
    <property type="type" value="phenotype"/>
</dbReference>
<dbReference type="MIM" id="600144">
    <property type="type" value="gene"/>
</dbReference>
<dbReference type="neXtProt" id="NX_Q14571"/>
<dbReference type="OpenTargets" id="ENSG00000123104"/>
<dbReference type="Orphanet" id="468666">
    <property type="disease" value="Isolated generalized anhidrosis with normal sweat glands"/>
</dbReference>
<dbReference type="PharmGKB" id="PA29979"/>
<dbReference type="VEuPathDB" id="HostDB:ENSG00000123104"/>
<dbReference type="eggNOG" id="KOG3533">
    <property type="taxonomic scope" value="Eukaryota"/>
</dbReference>
<dbReference type="GeneTree" id="ENSGT00940000156039"/>
<dbReference type="HOGENOM" id="CLU_000206_1_0_1"/>
<dbReference type="InParanoid" id="Q14571"/>
<dbReference type="OMA" id="GTCEKDN"/>
<dbReference type="OrthoDB" id="300855at2759"/>
<dbReference type="PAN-GO" id="Q14571">
    <property type="GO annotations" value="9 GO annotations based on evolutionary models"/>
</dbReference>
<dbReference type="PhylomeDB" id="Q14571"/>
<dbReference type="TreeFam" id="TF312815"/>
<dbReference type="PathwayCommons" id="Q14571"/>
<dbReference type="Reactome" id="R-HSA-112043">
    <property type="pathway name" value="PLC beta mediated events"/>
</dbReference>
<dbReference type="Reactome" id="R-HSA-114508">
    <property type="pathway name" value="Effects of PIP2 hydrolysis"/>
</dbReference>
<dbReference type="Reactome" id="R-HSA-139853">
    <property type="pathway name" value="Elevation of cytosolic Ca2+ levels"/>
</dbReference>
<dbReference type="Reactome" id="R-HSA-1489509">
    <property type="pathway name" value="DAG and IP3 signaling"/>
</dbReference>
<dbReference type="Reactome" id="R-HSA-2029485">
    <property type="pathway name" value="Role of phospholipids in phagocytosis"/>
</dbReference>
<dbReference type="Reactome" id="R-HSA-2871809">
    <property type="pathway name" value="FCERI mediated Ca+2 mobilization"/>
</dbReference>
<dbReference type="Reactome" id="R-HSA-381676">
    <property type="pathway name" value="Glucagon-like Peptide-1 (GLP1) regulates insulin secretion"/>
</dbReference>
<dbReference type="Reactome" id="R-HSA-4086398">
    <property type="pathway name" value="Ca2+ pathway"/>
</dbReference>
<dbReference type="Reactome" id="R-HSA-422356">
    <property type="pathway name" value="Regulation of insulin secretion"/>
</dbReference>
<dbReference type="Reactome" id="R-HSA-5218921">
    <property type="pathway name" value="VEGFR2 mediated cell proliferation"/>
</dbReference>
<dbReference type="Reactome" id="R-HSA-5578775">
    <property type="pathway name" value="Ion homeostasis"/>
</dbReference>
<dbReference type="Reactome" id="R-HSA-5607763">
    <property type="pathway name" value="CLEC7A (Dectin-1) induces NFAT activation"/>
</dbReference>
<dbReference type="Reactome" id="R-HSA-9664323">
    <property type="pathway name" value="FCGR3A-mediated IL10 synthesis"/>
</dbReference>
<dbReference type="Reactome" id="R-HSA-983695">
    <property type="pathway name" value="Antigen activates B Cell Receptor (BCR) leading to generation of second messengers"/>
</dbReference>
<dbReference type="SignaLink" id="Q14571"/>
<dbReference type="SIGNOR" id="Q14571"/>
<dbReference type="BioGRID-ORCS" id="3709">
    <property type="hits" value="21 hits in 1151 CRISPR screens"/>
</dbReference>
<dbReference type="ChiTaRS" id="ITPR2">
    <property type="organism name" value="human"/>
</dbReference>
<dbReference type="GeneWiki" id="ITPR2"/>
<dbReference type="GenomeRNAi" id="3709"/>
<dbReference type="Pharos" id="Q14571">
    <property type="development level" value="Tbio"/>
</dbReference>
<dbReference type="PRO" id="PR:Q14571"/>
<dbReference type="Proteomes" id="UP000005640">
    <property type="component" value="Chromosome 12"/>
</dbReference>
<dbReference type="RNAct" id="Q14571">
    <property type="molecule type" value="protein"/>
</dbReference>
<dbReference type="Bgee" id="ENSG00000123104">
    <property type="expression patterns" value="Expressed in calcaneal tendon and 195 other cell types or tissues"/>
</dbReference>
<dbReference type="ExpressionAtlas" id="Q14571">
    <property type="expression patterns" value="baseline and differential"/>
</dbReference>
<dbReference type="GO" id="GO:0005938">
    <property type="term" value="C:cell cortex"/>
    <property type="evidence" value="ECO:0007669"/>
    <property type="project" value="Ensembl"/>
</dbReference>
<dbReference type="GO" id="GO:0005789">
    <property type="term" value="C:endoplasmic reticulum membrane"/>
    <property type="evidence" value="ECO:0000250"/>
    <property type="project" value="UniProt"/>
</dbReference>
<dbReference type="GO" id="GO:0016020">
    <property type="term" value="C:membrane"/>
    <property type="evidence" value="ECO:0007005"/>
    <property type="project" value="UniProtKB"/>
</dbReference>
<dbReference type="GO" id="GO:0005886">
    <property type="term" value="C:plasma membrane"/>
    <property type="evidence" value="ECO:0000314"/>
    <property type="project" value="BHF-UCL"/>
</dbReference>
<dbReference type="GO" id="GO:0031095">
    <property type="term" value="C:platelet dense tubular network membrane"/>
    <property type="evidence" value="ECO:0000304"/>
    <property type="project" value="Reactome"/>
</dbReference>
<dbReference type="GO" id="GO:0043235">
    <property type="term" value="C:receptor complex"/>
    <property type="evidence" value="ECO:0000314"/>
    <property type="project" value="MGI"/>
</dbReference>
<dbReference type="GO" id="GO:0016529">
    <property type="term" value="C:sarcoplasmic reticulum"/>
    <property type="evidence" value="ECO:0000318"/>
    <property type="project" value="GO_Central"/>
</dbReference>
<dbReference type="GO" id="GO:0033017">
    <property type="term" value="C:sarcoplasmic reticulum membrane"/>
    <property type="evidence" value="ECO:0000315"/>
    <property type="project" value="BHF-UCL"/>
</dbReference>
<dbReference type="GO" id="GO:0030667">
    <property type="term" value="C:secretory granule membrane"/>
    <property type="evidence" value="ECO:0000318"/>
    <property type="project" value="GO_Central"/>
</dbReference>
<dbReference type="GO" id="GO:0030658">
    <property type="term" value="C:transport vesicle membrane"/>
    <property type="evidence" value="ECO:0007669"/>
    <property type="project" value="UniProtKB-SubCell"/>
</dbReference>
<dbReference type="GO" id="GO:0005524">
    <property type="term" value="F:ATP binding"/>
    <property type="evidence" value="ECO:0007669"/>
    <property type="project" value="UniProtKB-KW"/>
</dbReference>
<dbReference type="GO" id="GO:0005509">
    <property type="term" value="F:calcium ion binding"/>
    <property type="evidence" value="ECO:0000318"/>
    <property type="project" value="GO_Central"/>
</dbReference>
<dbReference type="GO" id="GO:0015085">
    <property type="term" value="F:calcium ion transmembrane transporter activity"/>
    <property type="evidence" value="ECO:0000304"/>
    <property type="project" value="ProtInc"/>
</dbReference>
<dbReference type="GO" id="GO:0070679">
    <property type="term" value="F:inositol 1,4,5 trisphosphate binding"/>
    <property type="evidence" value="ECO:0000318"/>
    <property type="project" value="GO_Central"/>
</dbReference>
<dbReference type="GO" id="GO:0005220">
    <property type="term" value="F:inositol 1,4,5-trisphosphate-gated calcium channel activity"/>
    <property type="evidence" value="ECO:0000250"/>
    <property type="project" value="UniProtKB"/>
</dbReference>
<dbReference type="GO" id="GO:0035091">
    <property type="term" value="F:phosphatidylinositol binding"/>
    <property type="evidence" value="ECO:0000318"/>
    <property type="project" value="GO_Central"/>
</dbReference>
<dbReference type="GO" id="GO:0097110">
    <property type="term" value="F:scaffold protein binding"/>
    <property type="evidence" value="ECO:0000353"/>
    <property type="project" value="UniProtKB"/>
</dbReference>
<dbReference type="GO" id="GO:0044325">
    <property type="term" value="F:transmembrane transporter binding"/>
    <property type="evidence" value="ECO:0000353"/>
    <property type="project" value="ARUK-UCL"/>
</dbReference>
<dbReference type="GO" id="GO:0071320">
    <property type="term" value="P:cellular response to cAMP"/>
    <property type="evidence" value="ECO:0007669"/>
    <property type="project" value="Ensembl"/>
</dbReference>
<dbReference type="GO" id="GO:0071361">
    <property type="term" value="P:cellular response to ethanol"/>
    <property type="evidence" value="ECO:0007669"/>
    <property type="project" value="Ensembl"/>
</dbReference>
<dbReference type="GO" id="GO:0051209">
    <property type="term" value="P:release of sequestered calcium ion into cytosol"/>
    <property type="evidence" value="ECO:0000250"/>
    <property type="project" value="UniProtKB"/>
</dbReference>
<dbReference type="GO" id="GO:0001666">
    <property type="term" value="P:response to hypoxia"/>
    <property type="evidence" value="ECO:0000314"/>
    <property type="project" value="BHF-UCL"/>
</dbReference>
<dbReference type="GO" id="GO:0007165">
    <property type="term" value="P:signal transduction"/>
    <property type="evidence" value="ECO:0000304"/>
    <property type="project" value="ProtInc"/>
</dbReference>
<dbReference type="CDD" id="cd23288">
    <property type="entry name" value="beta-trefoil_MIR_ITPR2"/>
    <property type="match status" value="1"/>
</dbReference>
<dbReference type="FunFam" id="2.80.10.50:FF:000002">
    <property type="entry name" value="Inositol 1,4,5-trisphosphate receptor type 2"/>
    <property type="match status" value="1"/>
</dbReference>
<dbReference type="FunFam" id="2.80.10.50:FF:000005">
    <property type="entry name" value="Inositol 1,4,5-trisphosphate receptor type 2"/>
    <property type="match status" value="1"/>
</dbReference>
<dbReference type="FunFam" id="1.10.287.70:FF:000079">
    <property type="entry name" value="Inositol 1,4,5-trisphosphate receptor type 3"/>
    <property type="match status" value="1"/>
</dbReference>
<dbReference type="FunFam" id="1.25.10.30:FF:000001">
    <property type="entry name" value="Inositol 1,4,5-trisphosphate receptor, type 2"/>
    <property type="match status" value="1"/>
</dbReference>
<dbReference type="Gene3D" id="1.10.287.70">
    <property type="match status" value="1"/>
</dbReference>
<dbReference type="Gene3D" id="2.80.10.50">
    <property type="match status" value="2"/>
</dbReference>
<dbReference type="Gene3D" id="1.25.10.30">
    <property type="entry name" value="IP3 receptor type 1 binding core, RIH domain"/>
    <property type="match status" value="1"/>
</dbReference>
<dbReference type="InterPro" id="IPR016024">
    <property type="entry name" value="ARM-type_fold"/>
</dbReference>
<dbReference type="InterPro" id="IPR014821">
    <property type="entry name" value="Ins145_P3_rcpt"/>
</dbReference>
<dbReference type="InterPro" id="IPR000493">
    <property type="entry name" value="InsP3_rcpt"/>
</dbReference>
<dbReference type="InterPro" id="IPR005821">
    <property type="entry name" value="Ion_trans_dom"/>
</dbReference>
<dbReference type="InterPro" id="IPR036300">
    <property type="entry name" value="MIR_dom_sf"/>
</dbReference>
<dbReference type="InterPro" id="IPR016093">
    <property type="entry name" value="MIR_motif"/>
</dbReference>
<dbReference type="InterPro" id="IPR013662">
    <property type="entry name" value="RIH_assoc-dom"/>
</dbReference>
<dbReference type="InterPro" id="IPR000699">
    <property type="entry name" value="RIH_dom"/>
</dbReference>
<dbReference type="InterPro" id="IPR015925">
    <property type="entry name" value="Ryanodine_IP3_receptor"/>
</dbReference>
<dbReference type="InterPro" id="IPR035910">
    <property type="entry name" value="RyR/IP3R_RIH_dom_sf"/>
</dbReference>
<dbReference type="PANTHER" id="PTHR45816:SF3">
    <property type="entry name" value="INOSITOL 1,4,5-TRISPHOSPHATE RECEPTOR"/>
    <property type="match status" value="1"/>
</dbReference>
<dbReference type="PANTHER" id="PTHR45816">
    <property type="entry name" value="MIR DOMAIN-CONTAINING PROTEIN"/>
    <property type="match status" value="1"/>
</dbReference>
<dbReference type="Pfam" id="PF08709">
    <property type="entry name" value="Ins145_P3_rec"/>
    <property type="match status" value="1"/>
</dbReference>
<dbReference type="Pfam" id="PF00520">
    <property type="entry name" value="Ion_trans"/>
    <property type="match status" value="1"/>
</dbReference>
<dbReference type="Pfam" id="PF02815">
    <property type="entry name" value="MIR"/>
    <property type="match status" value="1"/>
</dbReference>
<dbReference type="Pfam" id="PF08454">
    <property type="entry name" value="RIH_assoc"/>
    <property type="match status" value="1"/>
</dbReference>
<dbReference type="Pfam" id="PF01365">
    <property type="entry name" value="RYDR_ITPR"/>
    <property type="match status" value="2"/>
</dbReference>
<dbReference type="PRINTS" id="PR00779">
    <property type="entry name" value="INSP3RECEPTR"/>
</dbReference>
<dbReference type="SMART" id="SM00472">
    <property type="entry name" value="MIR"/>
    <property type="match status" value="4"/>
</dbReference>
<dbReference type="SUPFAM" id="SSF48371">
    <property type="entry name" value="ARM repeat"/>
    <property type="match status" value="1"/>
</dbReference>
<dbReference type="SUPFAM" id="SSF100909">
    <property type="entry name" value="IP3 receptor type 1 binding core, domain 2"/>
    <property type="match status" value="2"/>
</dbReference>
<dbReference type="SUPFAM" id="SSF82109">
    <property type="entry name" value="MIR domain"/>
    <property type="match status" value="2"/>
</dbReference>
<dbReference type="PROSITE" id="PS50919">
    <property type="entry name" value="MIR"/>
    <property type="match status" value="5"/>
</dbReference>
<organism>
    <name type="scientific">Homo sapiens</name>
    <name type="common">Human</name>
    <dbReference type="NCBI Taxonomy" id="9606"/>
    <lineage>
        <taxon>Eukaryota</taxon>
        <taxon>Metazoa</taxon>
        <taxon>Chordata</taxon>
        <taxon>Craniata</taxon>
        <taxon>Vertebrata</taxon>
        <taxon>Euteleostomi</taxon>
        <taxon>Mammalia</taxon>
        <taxon>Eutheria</taxon>
        <taxon>Euarchontoglires</taxon>
        <taxon>Primates</taxon>
        <taxon>Haplorrhini</taxon>
        <taxon>Catarrhini</taxon>
        <taxon>Hominidae</taxon>
        <taxon>Homo</taxon>
    </lineage>
</organism>
<name>ITPR2_HUMAN</name>
<keyword id="KW-0025">Alternative splicing</keyword>
<keyword id="KW-0067">ATP-binding</keyword>
<keyword id="KW-0106">Calcium</keyword>
<keyword id="KW-0107">Calcium channel</keyword>
<keyword id="KW-0109">Calcium transport</keyword>
<keyword id="KW-0968">Cytoplasmic vesicle</keyword>
<keyword id="KW-0225">Disease variant</keyword>
<keyword id="KW-0256">Endoplasmic reticulum</keyword>
<keyword id="KW-0407">Ion channel</keyword>
<keyword id="KW-0406">Ion transport</keyword>
<keyword id="KW-1071">Ligand-gated ion channel</keyword>
<keyword id="KW-0472">Membrane</keyword>
<keyword id="KW-0479">Metal-binding</keyword>
<keyword id="KW-0547">Nucleotide-binding</keyword>
<keyword id="KW-0597">Phosphoprotein</keyword>
<keyword id="KW-1267">Proteomics identification</keyword>
<keyword id="KW-0675">Receptor</keyword>
<keyword id="KW-1185">Reference proteome</keyword>
<keyword id="KW-0677">Repeat</keyword>
<keyword id="KW-0812">Transmembrane</keyword>
<keyword id="KW-1133">Transmembrane helix</keyword>
<keyword id="KW-0813">Transport</keyword>
<keyword id="KW-0862">Zinc</keyword>
<protein>
    <recommendedName>
        <fullName evidence="15">Inositol 1,4,5-trisphosphate-gated calcium channel ITPR2</fullName>
    </recommendedName>
    <alternativeName>
        <fullName>IP3 receptor isoform 2</fullName>
        <shortName>IP3R 2</shortName>
        <shortName evidence="12">InsP3R2</shortName>
    </alternativeName>
    <alternativeName>
        <fullName>Inositol 1,4,5-trisphosphate receptor type 2</fullName>
    </alternativeName>
    <alternativeName>
        <fullName evidence="13">Type 2 inositol 1,4,5-trisphosphate receptor</fullName>
        <shortName>Type 2 InsP3 receptor</shortName>
    </alternativeName>
</protein>
<comment type="function">
    <text evidence="4">Inositol 1,4,5-trisphosphate-gated calcium channel that upon inositol 1,4,5-trisphosphate binding transports calcium from the endoplasmic reticulum lumen to cytoplasm. Exists in two states; a long-lived closed state where the channel is essentially 'parked' with only very rare visits to an open state and that ligands facilitate the transition from the 'parked' state into a 'drive' mode represented by periods of bursting activity (By similarity).</text>
</comment>
<comment type="catalytic activity">
    <reaction evidence="4">
        <text>Ca(2+)(in) = Ca(2+)(out)</text>
        <dbReference type="Rhea" id="RHEA:29671"/>
        <dbReference type="ChEBI" id="CHEBI:29108"/>
    </reaction>
</comment>
<comment type="activity regulation">
    <text evidence="1 4">Inositol 1,4,5-trisphosphate-gated calcium channel activity is increased by cAMP that occurs independently of PKA activation. ATP and cytosolic calcium modulate the open probability (Po) predominantly by facilitating extended 'bursting' activity of the channel (By similarity). Inositol 1,4,5-trisphosphate-gated calcium channel activity is inhibited by CALM1 in a calcium-dependent manner (By similarity).</text>
</comment>
<comment type="subunit">
    <text evidence="1 3 8 10">Homotetramer (By similarity). Interacts with CABP1 (PubMed:12032348). Interacts with BOK; regulates ITPR2 expression (By similarity). Interacts with BCL2L10 (PubMed:27995898). Interacts with TRPC4 (By similarity). Interacts with CHGA and CHGB (By similarity).</text>
</comment>
<comment type="subcellular location">
    <subcellularLocation>
        <location evidence="4">Endoplasmic reticulum membrane</location>
        <topology evidence="5">Multi-pass membrane protein</topology>
    </subcellularLocation>
    <subcellularLocation>
        <location evidence="3">Cytoplasmic vesicle</location>
        <location evidence="3">Secretory vesicle membrane</location>
        <topology evidence="5">Multi-pass membrane protein</topology>
    </subcellularLocation>
    <text evidence="4">Forms clusters on endoplasmic reticulum membrane upon inositol 1,4,5-trisphosphate binding.</text>
</comment>
<comment type="alternative products">
    <event type="alternative splicing"/>
    <isoform>
        <id>Q14571-1</id>
        <name>Long</name>
        <sequence type="displayed"/>
    </isoform>
    <isoform>
        <id>Q14571-2</id>
        <name>Short</name>
        <name>TIPR</name>
        <sequence type="described" ref="VSP_002699 VSP_002700"/>
    </isoform>
</comment>
<comment type="tissue specificity">
    <molecule>Isoform Short</molecule>
    <text evidence="11">Found in skeletal muscle and heart.</text>
</comment>
<comment type="PTM">
    <text evidence="4">Phosphorylation by cAMP-dependent PKA on Ser-937 increases calcium release.</text>
</comment>
<comment type="PTM">
    <text evidence="1">Phosphorylation by CaMK2 on Ser-150 significantly decreases the channel open probability.</text>
</comment>
<comment type="disease" evidence="9">
    <disease id="DI-04405">
        <name>Anhidrosis, isolated, with normal sweat glands</name>
        <acronym>ANHD</acronym>
        <description>An autosomal recessive disorder characterized by generalized, isolated anhidrosis, severe heat intolerance, and morphologically normal eccrine sweat glands. Body growth, teeth, hair, nails, and skin are normal.</description>
        <dbReference type="MIM" id="106190"/>
    </disease>
    <text>The disease is caused by variants affecting the gene represented in this entry.</text>
</comment>
<comment type="similarity">
    <text evidence="15">Belongs to the InsP3 receptor family.</text>
</comment>
<feature type="chain" id="PRO_0000153924" description="Inositol 1,4,5-trisphosphate-gated calcium channel ITPR2">
    <location>
        <begin position="1"/>
        <end position="2701"/>
    </location>
</feature>
<feature type="topological domain" description="Cytoplasmic" evidence="5">
    <location>
        <begin position="1"/>
        <end position="2227"/>
    </location>
</feature>
<feature type="transmembrane region" description="Helical" evidence="5">
    <location>
        <begin position="2228"/>
        <end position="2248"/>
    </location>
</feature>
<feature type="topological domain" description="Extracellular" evidence="5">
    <location>
        <begin position="2249"/>
        <end position="2260"/>
    </location>
</feature>
<feature type="transmembrane region" description="Helical" evidence="5">
    <location>
        <begin position="2261"/>
        <end position="2281"/>
    </location>
</feature>
<feature type="topological domain" description="Cytoplasmic" evidence="5">
    <location>
        <begin position="2282"/>
        <end position="2307"/>
    </location>
</feature>
<feature type="transmembrane region" description="Helical" evidence="5">
    <location>
        <begin position="2308"/>
        <end position="2328"/>
    </location>
</feature>
<feature type="topological domain" description="Extracellular" evidence="5">
    <location>
        <begin position="2329"/>
        <end position="2351"/>
    </location>
</feature>
<feature type="transmembrane region" description="Helical" evidence="5">
    <location>
        <begin position="2352"/>
        <end position="2372"/>
    </location>
</feature>
<feature type="topological domain" description="Cytoplasmic" evidence="5">
    <location>
        <begin position="2373"/>
        <end position="2394"/>
    </location>
</feature>
<feature type="transmembrane region" description="Helical" evidence="5">
    <location>
        <begin position="2395"/>
        <end position="2415"/>
    </location>
</feature>
<feature type="topological domain" description="Extracellular" evidence="5">
    <location>
        <begin position="2416"/>
        <end position="2521"/>
    </location>
</feature>
<feature type="transmembrane region" description="Helical" evidence="5">
    <location>
        <begin position="2522"/>
        <end position="2542"/>
    </location>
</feature>
<feature type="topological domain" description="Cytoplasmic" evidence="5">
    <location>
        <begin position="2543"/>
        <end position="2701"/>
    </location>
</feature>
<feature type="domain" description="MIR 1" evidence="6">
    <location>
        <begin position="112"/>
        <end position="166"/>
    </location>
</feature>
<feature type="domain" description="MIR 2" evidence="6">
    <location>
        <begin position="173"/>
        <end position="223"/>
    </location>
</feature>
<feature type="domain" description="MIR 3" evidence="6">
    <location>
        <begin position="231"/>
        <end position="287"/>
    </location>
</feature>
<feature type="domain" description="MIR 4" evidence="6">
    <location>
        <begin position="294"/>
        <end position="372"/>
    </location>
</feature>
<feature type="domain" description="MIR 5" evidence="6">
    <location>
        <begin position="378"/>
        <end position="434"/>
    </location>
</feature>
<feature type="region of interest" description="Disordered" evidence="7">
    <location>
        <begin position="1140"/>
        <end position="1174"/>
    </location>
</feature>
<feature type="binding site" evidence="2">
    <location>
        <position position="265"/>
    </location>
    <ligand>
        <name>1D-myo-inositol 1,4,5-trisphosphate</name>
        <dbReference type="ChEBI" id="CHEBI:203600"/>
    </ligand>
</feature>
<feature type="binding site" evidence="2">
    <location>
        <position position="267"/>
    </location>
    <ligand>
        <name>1D-myo-inositol 1,4,5-trisphosphate</name>
        <dbReference type="ChEBI" id="CHEBI:203600"/>
    </ligand>
</feature>
<feature type="binding site" evidence="2">
    <location>
        <position position="268"/>
    </location>
    <ligand>
        <name>1D-myo-inositol 1,4,5-trisphosphate</name>
        <dbReference type="ChEBI" id="CHEBI:203600"/>
    </ligand>
</feature>
<feature type="binding site" evidence="2">
    <location>
        <position position="269"/>
    </location>
    <ligand>
        <name>1D-myo-inositol 1,4,5-trisphosphate</name>
        <dbReference type="ChEBI" id="CHEBI:203600"/>
    </ligand>
</feature>
<feature type="binding site" evidence="2">
    <location>
        <position position="503"/>
    </location>
    <ligand>
        <name>1D-myo-inositol 1,4,5-trisphosphate</name>
        <dbReference type="ChEBI" id="CHEBI:203600"/>
    </ligand>
</feature>
<feature type="binding site" evidence="2">
    <location>
        <position position="507"/>
    </location>
    <ligand>
        <name>1D-myo-inositol 1,4,5-trisphosphate</name>
        <dbReference type="ChEBI" id="CHEBI:203600"/>
    </ligand>
</feature>
<feature type="binding site" evidence="2">
    <location>
        <position position="510"/>
    </location>
    <ligand>
        <name>1D-myo-inositol 1,4,5-trisphosphate</name>
        <dbReference type="ChEBI" id="CHEBI:203600"/>
    </ligand>
</feature>
<feature type="binding site" evidence="2">
    <location>
        <position position="567"/>
    </location>
    <ligand>
        <name>1D-myo-inositol 1,4,5-trisphosphate</name>
        <dbReference type="ChEBI" id="CHEBI:203600"/>
    </ligand>
</feature>
<feature type="binding site" evidence="2">
    <location>
        <position position="568"/>
    </location>
    <ligand>
        <name>1D-myo-inositol 1,4,5-trisphosphate</name>
        <dbReference type="ChEBI" id="CHEBI:203600"/>
    </ligand>
</feature>
<feature type="binding site" evidence="2">
    <location>
        <position position="569"/>
    </location>
    <ligand>
        <name>1D-myo-inositol 1,4,5-trisphosphate</name>
        <dbReference type="ChEBI" id="CHEBI:203600"/>
    </ligand>
</feature>
<feature type="binding site" evidence="2">
    <location>
        <position position="744"/>
    </location>
    <ligand>
        <name>Ca(2+)</name>
        <dbReference type="ChEBI" id="CHEBI:29108"/>
        <label>1</label>
        <note>low affinity</note>
    </ligand>
</feature>
<feature type="binding site" evidence="2">
    <location>
        <position position="1124"/>
    </location>
    <ligand>
        <name>Ca(2+)</name>
        <dbReference type="ChEBI" id="CHEBI:29108"/>
        <label>1</label>
        <note>low affinity</note>
    </ligand>
</feature>
<feature type="binding site" evidence="2">
    <location>
        <position position="1127"/>
    </location>
    <ligand>
        <name>Ca(2+)</name>
        <dbReference type="ChEBI" id="CHEBI:29108"/>
        <label>1</label>
        <note>low affinity</note>
    </ligand>
</feature>
<feature type="binding site" evidence="2">
    <location>
        <position position="1930"/>
    </location>
    <ligand>
        <name>Ca(2+)</name>
        <dbReference type="ChEBI" id="CHEBI:29108"/>
        <label>2</label>
        <note>high affinity</note>
    </ligand>
</feature>
<feature type="binding site" evidence="2">
    <location>
        <position position="1994"/>
    </location>
    <ligand>
        <name>Ca(2+)</name>
        <dbReference type="ChEBI" id="CHEBI:29108"/>
        <label>2</label>
        <note>high affinity</note>
    </ligand>
</feature>
<feature type="binding site" evidence="2">
    <location>
        <position position="2044"/>
    </location>
    <ligand>
        <name>ATP</name>
        <dbReference type="ChEBI" id="CHEBI:30616"/>
    </ligand>
</feature>
<feature type="binding site" evidence="2">
    <location>
        <position position="2177"/>
    </location>
    <ligand>
        <name>ATP</name>
        <dbReference type="ChEBI" id="CHEBI:30616"/>
    </ligand>
</feature>
<feature type="binding site" evidence="2">
    <location>
        <position position="2562"/>
    </location>
    <ligand>
        <name>ATP</name>
        <dbReference type="ChEBI" id="CHEBI:30616"/>
    </ligand>
</feature>
<feature type="binding site" evidence="2">
    <location>
        <position position="2562"/>
    </location>
    <ligand>
        <name>Zn(2+)</name>
        <dbReference type="ChEBI" id="CHEBI:29105"/>
    </ligand>
</feature>
<feature type="binding site" evidence="2">
    <location>
        <position position="2563"/>
    </location>
    <ligand>
        <name>ATP</name>
        <dbReference type="ChEBI" id="CHEBI:30616"/>
    </ligand>
</feature>
<feature type="binding site" evidence="2">
    <location>
        <position position="2565"/>
    </location>
    <ligand>
        <name>Zn(2+)</name>
        <dbReference type="ChEBI" id="CHEBI:29105"/>
    </ligand>
</feature>
<feature type="binding site" evidence="2">
    <location>
        <position position="2582"/>
    </location>
    <ligand>
        <name>Zn(2+)</name>
        <dbReference type="ChEBI" id="CHEBI:29105"/>
    </ligand>
</feature>
<feature type="binding site" evidence="2">
    <location>
        <position position="2584"/>
    </location>
    <ligand>
        <name>ATP</name>
        <dbReference type="ChEBI" id="CHEBI:30616"/>
    </ligand>
</feature>
<feature type="binding site" evidence="2">
    <location>
        <position position="2587"/>
    </location>
    <ligand>
        <name>ATP</name>
        <dbReference type="ChEBI" id="CHEBI:30616"/>
    </ligand>
</feature>
<feature type="binding site" evidence="2">
    <location>
        <position position="2587"/>
    </location>
    <ligand>
        <name>Zn(2+)</name>
        <dbReference type="ChEBI" id="CHEBI:29105"/>
    </ligand>
</feature>
<feature type="binding site" evidence="2">
    <location>
        <position position="2588"/>
    </location>
    <ligand>
        <name>ATP</name>
        <dbReference type="ChEBI" id="CHEBI:30616"/>
    </ligand>
</feature>
<feature type="binding site" evidence="2">
    <location>
        <position position="2589"/>
    </location>
    <ligand>
        <name>ATP</name>
        <dbReference type="ChEBI" id="CHEBI:30616"/>
    </ligand>
</feature>
<feature type="binding site" evidence="2">
    <location>
        <position position="2605"/>
    </location>
    <ligand>
        <name>Ca(2+)</name>
        <dbReference type="ChEBI" id="CHEBI:29108"/>
        <label>2</label>
        <note>high affinity</note>
    </ligand>
</feature>
<feature type="modified residue" description="Phosphoserine; by PKA" evidence="4">
    <location>
        <position position="937"/>
    </location>
</feature>
<feature type="modified residue" description="Phosphoserine" evidence="17 18">
    <location>
        <position position="1160"/>
    </location>
</feature>
<feature type="modified residue" description="Phosphoserine" evidence="4">
    <location>
        <position position="1709"/>
    </location>
</feature>
<feature type="modified residue" description="Phosphotyrosine" evidence="5">
    <location>
        <position position="2607"/>
    </location>
</feature>
<feature type="modified residue" description="Phosphoserine" evidence="4">
    <location>
        <position position="2633"/>
    </location>
</feature>
<feature type="modified residue" description="Phosphoserine" evidence="4">
    <location>
        <position position="2636"/>
    </location>
</feature>
<feature type="splice variant" id="VSP_002699" description="In isoform Short." evidence="14">
    <original>IVVGDK</original>
    <variation>DASFWI</variation>
    <location>
        <begin position="176"/>
        <end position="181"/>
    </location>
</feature>
<feature type="splice variant" id="VSP_002700" description="In isoform Short." evidence="14">
    <location>
        <begin position="182"/>
        <end position="2701"/>
    </location>
</feature>
<feature type="sequence variant" id="VAR_055963" description="In dbSNP:rs2230384.">
    <original>A</original>
    <variation>V</variation>
    <location>
        <position position="453"/>
    </location>
</feature>
<feature type="sequence variant" id="VAR_055964" description="In dbSNP:rs2230373.">
    <original>E</original>
    <variation>D</variation>
    <location>
        <position position="1143"/>
    </location>
</feature>
<feature type="sequence variant" id="VAR_055965" description="In dbSNP:rs2230382.">
    <original>A</original>
    <variation>V</variation>
    <location>
        <position position="1898"/>
    </location>
</feature>
<feature type="sequence variant" id="VAR_073688" description="In ANHD; loss of function mutation is shown by expressing the mouse mutant; dbSNP:rs786204832." evidence="9">
    <original>G</original>
    <variation>S</variation>
    <location>
        <position position="2498"/>
    </location>
</feature>
<feature type="sequence conflict" description="In Ref. 1; BAA05384." evidence="15" ref="1">
    <original>A</original>
    <variation>P</variation>
    <location>
        <position position="597"/>
    </location>
</feature>
<feature type="sequence conflict" description="In Ref. 1; BAA05384." evidence="15" ref="1">
    <original>P</original>
    <variation>A</variation>
    <location>
        <position position="1070"/>
    </location>
</feature>
<feature type="sequence conflict" description="In Ref. 1; BAA05384." evidence="15" ref="1">
    <original>N</original>
    <variation>K</variation>
    <location>
        <position position="1178"/>
    </location>
</feature>
<reference key="1">
    <citation type="journal article" date="1994" name="Recept. Channels">
        <title>Cloning and characterization of human type 2 and type 3 inositol 1,4,5-trisphosphate receptors.</title>
        <authorList>
            <person name="Yamamoto-Hino M."/>
            <person name="Sugiyama T."/>
            <person name="Hikiti K."/>
            <person name="Mattei M.-G."/>
            <person name="Hasegawa K."/>
            <person name="Sekine S."/>
            <person name="Sakurada K."/>
            <person name="Miyawaki A."/>
            <person name="Furuichi T."/>
            <person name="Hasegawa M."/>
            <person name="Mikoshiba K."/>
        </authorList>
    </citation>
    <scope>NUCLEOTIDE SEQUENCE [MRNA] (ISOFORM LONG)</scope>
</reference>
<reference key="2">
    <citation type="journal article" date="1998" name="Biochem. J.">
        <title>Muscle-specific mRNA isoform encodes a protein composed mainly of the N-terminal 175 residues of type 2 Ins(1,4,5)P3 receptor.</title>
        <authorList>
            <person name="Futatsugi A."/>
            <person name="Kuwajima G."/>
            <person name="Mikoshiba K."/>
        </authorList>
    </citation>
    <scope>NUCLEOTIDE SEQUENCE [MRNA] (ISOFORM SHORT)</scope>
    <scope>TISSUE SPECIFICITY</scope>
    <source>
        <tissue>Heart</tissue>
    </source>
</reference>
<reference key="3">
    <citation type="journal article" date="2006" name="Nature">
        <title>The finished DNA sequence of human chromosome 12.</title>
        <authorList>
            <person name="Scherer S.E."/>
            <person name="Muzny D.M."/>
            <person name="Buhay C.J."/>
            <person name="Chen R."/>
            <person name="Cree A."/>
            <person name="Ding Y."/>
            <person name="Dugan-Rocha S."/>
            <person name="Gill R."/>
            <person name="Gunaratne P."/>
            <person name="Harris R.A."/>
            <person name="Hawes A.C."/>
            <person name="Hernandez J."/>
            <person name="Hodgson A.V."/>
            <person name="Hume J."/>
            <person name="Jackson A."/>
            <person name="Khan Z.M."/>
            <person name="Kovar-Smith C."/>
            <person name="Lewis L.R."/>
            <person name="Lozado R.J."/>
            <person name="Metzker M.L."/>
            <person name="Milosavljevic A."/>
            <person name="Miner G.R."/>
            <person name="Montgomery K.T."/>
            <person name="Morgan M.B."/>
            <person name="Nazareth L.V."/>
            <person name="Scott G."/>
            <person name="Sodergren E."/>
            <person name="Song X.-Z."/>
            <person name="Steffen D."/>
            <person name="Lovering R.C."/>
            <person name="Wheeler D.A."/>
            <person name="Worley K.C."/>
            <person name="Yuan Y."/>
            <person name="Zhang Z."/>
            <person name="Adams C.Q."/>
            <person name="Ansari-Lari M.A."/>
            <person name="Ayele M."/>
            <person name="Brown M.J."/>
            <person name="Chen G."/>
            <person name="Chen Z."/>
            <person name="Clerc-Blankenburg K.P."/>
            <person name="Davis C."/>
            <person name="Delgado O."/>
            <person name="Dinh H.H."/>
            <person name="Draper H."/>
            <person name="Gonzalez-Garay M.L."/>
            <person name="Havlak P."/>
            <person name="Jackson L.R."/>
            <person name="Jacob L.S."/>
            <person name="Kelly S.H."/>
            <person name="Li L."/>
            <person name="Li Z."/>
            <person name="Liu J."/>
            <person name="Liu W."/>
            <person name="Lu J."/>
            <person name="Maheshwari M."/>
            <person name="Nguyen B.-V."/>
            <person name="Okwuonu G.O."/>
            <person name="Pasternak S."/>
            <person name="Perez L.M."/>
            <person name="Plopper F.J.H."/>
            <person name="Santibanez J."/>
            <person name="Shen H."/>
            <person name="Tabor P.E."/>
            <person name="Verduzco D."/>
            <person name="Waldron L."/>
            <person name="Wang Q."/>
            <person name="Williams G.A."/>
            <person name="Zhang J."/>
            <person name="Zhou J."/>
            <person name="Allen C.C."/>
            <person name="Amin A.G."/>
            <person name="Anyalebechi V."/>
            <person name="Bailey M."/>
            <person name="Barbaria J.A."/>
            <person name="Bimage K.E."/>
            <person name="Bryant N.P."/>
            <person name="Burch P.E."/>
            <person name="Burkett C.E."/>
            <person name="Burrell K.L."/>
            <person name="Calderon E."/>
            <person name="Cardenas V."/>
            <person name="Carter K."/>
            <person name="Casias K."/>
            <person name="Cavazos I."/>
            <person name="Cavazos S.R."/>
            <person name="Ceasar H."/>
            <person name="Chacko J."/>
            <person name="Chan S.N."/>
            <person name="Chavez D."/>
            <person name="Christopoulos C."/>
            <person name="Chu J."/>
            <person name="Cockrell R."/>
            <person name="Cox C.D."/>
            <person name="Dang M."/>
            <person name="Dathorne S.R."/>
            <person name="David R."/>
            <person name="Davis C.M."/>
            <person name="Davy-Carroll L."/>
            <person name="Deshazo D.R."/>
            <person name="Donlin J.E."/>
            <person name="D'Souza L."/>
            <person name="Eaves K.A."/>
            <person name="Egan A."/>
            <person name="Emery-Cohen A.J."/>
            <person name="Escotto M."/>
            <person name="Flagg N."/>
            <person name="Forbes L.D."/>
            <person name="Gabisi A.M."/>
            <person name="Garza M."/>
            <person name="Hamilton C."/>
            <person name="Henderson N."/>
            <person name="Hernandez O."/>
            <person name="Hines S."/>
            <person name="Hogues M.E."/>
            <person name="Huang M."/>
            <person name="Idlebird D.G."/>
            <person name="Johnson R."/>
            <person name="Jolivet A."/>
            <person name="Jones S."/>
            <person name="Kagan R."/>
            <person name="King L.M."/>
            <person name="Leal B."/>
            <person name="Lebow H."/>
            <person name="Lee S."/>
            <person name="LeVan J.M."/>
            <person name="Lewis L.C."/>
            <person name="London P."/>
            <person name="Lorensuhewa L.M."/>
            <person name="Loulseged H."/>
            <person name="Lovett D.A."/>
            <person name="Lucier A."/>
            <person name="Lucier R.L."/>
            <person name="Ma J."/>
            <person name="Madu R.C."/>
            <person name="Mapua P."/>
            <person name="Martindale A.D."/>
            <person name="Martinez E."/>
            <person name="Massey E."/>
            <person name="Mawhiney S."/>
            <person name="Meador M.G."/>
            <person name="Mendez S."/>
            <person name="Mercado C."/>
            <person name="Mercado I.C."/>
            <person name="Merritt C.E."/>
            <person name="Miner Z.L."/>
            <person name="Minja E."/>
            <person name="Mitchell T."/>
            <person name="Mohabbat F."/>
            <person name="Mohabbat K."/>
            <person name="Montgomery B."/>
            <person name="Moore N."/>
            <person name="Morris S."/>
            <person name="Munidasa M."/>
            <person name="Ngo R.N."/>
            <person name="Nguyen N.B."/>
            <person name="Nickerson E."/>
            <person name="Nwaokelemeh O.O."/>
            <person name="Nwokenkwo S."/>
            <person name="Obregon M."/>
            <person name="Oguh M."/>
            <person name="Oragunye N."/>
            <person name="Oviedo R.J."/>
            <person name="Parish B.J."/>
            <person name="Parker D.N."/>
            <person name="Parrish J."/>
            <person name="Parks K.L."/>
            <person name="Paul H.A."/>
            <person name="Payton B.A."/>
            <person name="Perez A."/>
            <person name="Perrin W."/>
            <person name="Pickens A."/>
            <person name="Primus E.L."/>
            <person name="Pu L.-L."/>
            <person name="Puazo M."/>
            <person name="Quiles M.M."/>
            <person name="Quiroz J.B."/>
            <person name="Rabata D."/>
            <person name="Reeves K."/>
            <person name="Ruiz S.J."/>
            <person name="Shao H."/>
            <person name="Sisson I."/>
            <person name="Sonaike T."/>
            <person name="Sorelle R.P."/>
            <person name="Sutton A.E."/>
            <person name="Svatek A.F."/>
            <person name="Svetz L.A."/>
            <person name="Tamerisa K.S."/>
            <person name="Taylor T.R."/>
            <person name="Teague B."/>
            <person name="Thomas N."/>
            <person name="Thorn R.D."/>
            <person name="Trejos Z.Y."/>
            <person name="Trevino B.K."/>
            <person name="Ukegbu O.N."/>
            <person name="Urban J.B."/>
            <person name="Vasquez L.I."/>
            <person name="Vera V.A."/>
            <person name="Villasana D.M."/>
            <person name="Wang L."/>
            <person name="Ward-Moore S."/>
            <person name="Warren J.T."/>
            <person name="Wei X."/>
            <person name="White F."/>
            <person name="Williamson A.L."/>
            <person name="Wleczyk R."/>
            <person name="Wooden H.S."/>
            <person name="Wooden S.H."/>
            <person name="Yen J."/>
            <person name="Yoon L."/>
            <person name="Yoon V."/>
            <person name="Zorrilla S.E."/>
            <person name="Nelson D."/>
            <person name="Kucherlapati R."/>
            <person name="Weinstock G."/>
            <person name="Gibbs R.A."/>
        </authorList>
    </citation>
    <scope>NUCLEOTIDE SEQUENCE [LARGE SCALE GENOMIC DNA]</scope>
</reference>
<reference key="4">
    <citation type="journal article" date="2002" name="Proc. Natl. Acad. Sci. U.S.A.">
        <title>Identification of a family of calcium sensors as protein ligands of inositol trisphosphate receptor Ca(2+) release channels.</title>
        <authorList>
            <person name="Yang J."/>
            <person name="McBride S."/>
            <person name="Mak D.-O.D."/>
            <person name="Vardi N."/>
            <person name="Palczewski K."/>
            <person name="Haeseleer F."/>
            <person name="Foskett J.K."/>
        </authorList>
    </citation>
    <scope>INTERACTION WITH CABP1</scope>
</reference>
<reference key="5">
    <citation type="journal article" date="2008" name="Proc. Natl. Acad. Sci. U.S.A.">
        <title>A quantitative atlas of mitotic phosphorylation.</title>
        <authorList>
            <person name="Dephoure N."/>
            <person name="Zhou C."/>
            <person name="Villen J."/>
            <person name="Beausoleil S.A."/>
            <person name="Bakalarski C.E."/>
            <person name="Elledge S.J."/>
            <person name="Gygi S.P."/>
        </authorList>
    </citation>
    <scope>PHOSPHORYLATION [LARGE SCALE ANALYSIS] AT SER-1160</scope>
    <scope>IDENTIFICATION BY MASS SPECTROMETRY [LARGE SCALE ANALYSIS]</scope>
    <source>
        <tissue>Cervix carcinoma</tissue>
    </source>
</reference>
<reference key="6">
    <citation type="journal article" date="2011" name="BMC Syst. Biol.">
        <title>Initial characterization of the human central proteome.</title>
        <authorList>
            <person name="Burkard T.R."/>
            <person name="Planyavsky M."/>
            <person name="Kaupe I."/>
            <person name="Breitwieser F.P."/>
            <person name="Buerckstuemmer T."/>
            <person name="Bennett K.L."/>
            <person name="Superti-Furga G."/>
            <person name="Colinge J."/>
        </authorList>
    </citation>
    <scope>IDENTIFICATION BY MASS SPECTROMETRY [LARGE SCALE ANALYSIS]</scope>
</reference>
<reference key="7">
    <citation type="journal article" date="2013" name="J. Proteome Res.">
        <title>Toward a comprehensive characterization of a human cancer cell phosphoproteome.</title>
        <authorList>
            <person name="Zhou H."/>
            <person name="Di Palma S."/>
            <person name="Preisinger C."/>
            <person name="Peng M."/>
            <person name="Polat A.N."/>
            <person name="Heck A.J."/>
            <person name="Mohammed S."/>
        </authorList>
    </citation>
    <scope>PHOSPHORYLATION [LARGE SCALE ANALYSIS] AT SER-1160</scope>
    <scope>IDENTIFICATION BY MASS SPECTROMETRY [LARGE SCALE ANALYSIS]</scope>
    <source>
        <tissue>Cervix carcinoma</tissue>
    </source>
</reference>
<reference key="8">
    <citation type="journal article" date="2014" name="J. Clin. Invest.">
        <title>Abolished InsP3R2 function inhibits sweat secretion in both humans and mice.</title>
        <authorList>
            <person name="Klar J."/>
            <person name="Hisatsune C."/>
            <person name="Baig S.M."/>
            <person name="Tariq M."/>
            <person name="Johansson A.C."/>
            <person name="Rasool M."/>
            <person name="Malik N.A."/>
            <person name="Ameur A."/>
            <person name="Sugiura K."/>
            <person name="Feuk L."/>
            <person name="Mikoshiba K."/>
            <person name="Dahl N."/>
        </authorList>
    </citation>
    <scope>INVOLVEMENT IN ANHD</scope>
    <scope>VARIANT ANHD SER-2498</scope>
    <scope>CHARACTERIZATION OF VARIANT ANHD SER-2498</scope>
</reference>
<reference key="9">
    <citation type="journal article" date="2014" name="J. Proteomics">
        <title>An enzyme assisted RP-RPLC approach for in-depth analysis of human liver phosphoproteome.</title>
        <authorList>
            <person name="Bian Y."/>
            <person name="Song C."/>
            <person name="Cheng K."/>
            <person name="Dong M."/>
            <person name="Wang F."/>
            <person name="Huang J."/>
            <person name="Sun D."/>
            <person name="Wang L."/>
            <person name="Ye M."/>
            <person name="Zou H."/>
        </authorList>
    </citation>
    <scope>IDENTIFICATION BY MASS SPECTROMETRY [LARGE SCALE ANALYSIS]</scope>
    <source>
        <tissue>Liver</tissue>
    </source>
</reference>
<reference key="10">
    <citation type="journal article" date="2016" name="Elife">
        <title>IRBIT controls apoptosis by interacting with the Bcl-2 homolog, Bcl2l10, and by promoting ER-mitochondria contact.</title>
        <authorList>
            <person name="Bonneau B."/>
            <person name="Ando H."/>
            <person name="Kawaai K."/>
            <person name="Hirose M."/>
            <person name="Takahashi-Iwanaga H."/>
            <person name="Mikoshiba K."/>
        </authorList>
    </citation>
    <scope>INTERACTION WITH BCL2L10</scope>
</reference>